<comment type="function">
    <text evidence="6">Cleaves A-5'-PPP-5'A to yield AMP and ADP.</text>
</comment>
<comment type="catalytic activity">
    <reaction evidence="6">
        <text>P(1),P(3)-bis(5'-adenosyl) triphosphate + H2O = AMP + ADP + 2 H(+)</text>
        <dbReference type="Rhea" id="RHEA:13893"/>
        <dbReference type="ChEBI" id="CHEBI:15377"/>
        <dbReference type="ChEBI" id="CHEBI:15378"/>
        <dbReference type="ChEBI" id="CHEBI:58529"/>
        <dbReference type="ChEBI" id="CHEBI:456215"/>
        <dbReference type="ChEBI" id="CHEBI:456216"/>
        <dbReference type="EC" id="3.6.1.29"/>
    </reaction>
</comment>
<comment type="cofactor">
    <cofactor evidence="1">
        <name>Mn(2+)</name>
        <dbReference type="ChEBI" id="CHEBI:29035"/>
    </cofactor>
</comment>
<comment type="subunit">
    <text evidence="6">Homotetramer.</text>
</comment>
<comment type="developmental stage">
    <text evidence="7">Expressed in adult.</text>
</comment>
<comment type="similarity">
    <text evidence="3">In the N-terminal section; belongs to the UPF0012 family.</text>
</comment>
<name>NFT1_CAEEL</name>
<evidence type="ECO:0000250" key="1"/>
<evidence type="ECO:0000250" key="2">
    <source>
        <dbReference type="UniProtKB" id="P49789"/>
    </source>
</evidence>
<evidence type="ECO:0000255" key="3"/>
<evidence type="ECO:0000255" key="4">
    <source>
        <dbReference type="PROSITE-ProRule" id="PRU00054"/>
    </source>
</evidence>
<evidence type="ECO:0000255" key="5">
    <source>
        <dbReference type="PROSITE-ProRule" id="PRU00464"/>
    </source>
</evidence>
<evidence type="ECO:0000269" key="6">
    <source>
    </source>
</evidence>
<evidence type="ECO:0000269" key="7">
    <source>
    </source>
</evidence>
<evidence type="ECO:0000303" key="8">
    <source>
    </source>
</evidence>
<evidence type="ECO:0000305" key="9"/>
<evidence type="ECO:0000312" key="10">
    <source>
        <dbReference type="EMBL" id="AAC39136.1"/>
    </source>
</evidence>
<evidence type="ECO:0000312" key="11">
    <source>
        <dbReference type="WormBase" id="Y56A3A.13"/>
    </source>
</evidence>
<evidence type="ECO:0007829" key="12">
    <source>
        <dbReference type="PDB" id="1EMS"/>
    </source>
</evidence>
<organism>
    <name type="scientific">Caenorhabditis elegans</name>
    <dbReference type="NCBI Taxonomy" id="6239"/>
    <lineage>
        <taxon>Eukaryota</taxon>
        <taxon>Metazoa</taxon>
        <taxon>Ecdysozoa</taxon>
        <taxon>Nematoda</taxon>
        <taxon>Chromadorea</taxon>
        <taxon>Rhabditida</taxon>
        <taxon>Rhabditina</taxon>
        <taxon>Rhabditomorpha</taxon>
        <taxon>Rhabditoidea</taxon>
        <taxon>Rhabditidae</taxon>
        <taxon>Peloderinae</taxon>
        <taxon>Caenorhabditis</taxon>
    </lineage>
</organism>
<keyword id="KW-0002">3D-structure</keyword>
<keyword id="KW-0903">Direct protein sequencing</keyword>
<keyword id="KW-0378">Hydrolase</keyword>
<keyword id="KW-0511">Multifunctional enzyme</keyword>
<keyword id="KW-0547">Nucleotide-binding</keyword>
<keyword id="KW-1185">Reference proteome</keyword>
<accession>O76463</accession>
<sequence length="440" mass="49936">MLSTVFRRTMATGRHFIAVCQMTSDNDLEKNFQAAKNMIERAGEKKCEMVFLPECFDFIGLNKNEQIDLAMATDCEYMEKYRELARKHNIWLSLGGLHHKDPSDAAHPWNTHLIIDSDGVTRAEYNKLHLFDLEIPGKVRLMESEFSKAGTEMIPPVDTPIGRLGLSICYDVRFPELSLWNRKRGAQLLSFPSAFTLNTGLAHWETLLRARAIENQCYVVAAAQTGAHNPKRQSYGHSMVVDPWGAVVAQCSERVDMCFAEIDLSYVDTLREMQPVFSHRRSDLYTLHINEKSSETGGLKFARFNIPADHIFYSTPHSFVFVNLKPVTDGHVLVSPKRVVPRLTDLTDAETADLFIVAKKVQAMLEKHHNVTSTTICVQDGKDAGQTVPHVHIHILPRRAGDFGDNEIYQKLASHDKEPERKPRSNEQMAEEAVVYRNLM</sequence>
<reference evidence="9 10" key="1">
    <citation type="journal article" date="1998" name="Proc. Natl. Acad. Sci. U.S.A.">
        <title>Nitrilase and Fhit homologs are encoded as fusion proteins in Drosophila melanogaster and Caenorhabditis elegans.</title>
        <authorList>
            <person name="Pekarsky Y."/>
            <person name="Campiglio M."/>
            <person name="Siprashvili Z."/>
            <person name="Druck T."/>
            <person name="Sedkov Y."/>
            <person name="Tillib S."/>
            <person name="Draganescu A."/>
            <person name="Wermuth P."/>
            <person name="Rothman J.H."/>
            <person name="Huebner K."/>
            <person name="Buchberg A.M."/>
            <person name="Mazo A."/>
            <person name="Brenner C."/>
            <person name="Croce C.M."/>
        </authorList>
    </citation>
    <scope>NUCLEOTIDE SEQUENCE [MRNA]</scope>
    <scope>DEVELOPMENTAL STAGE</scope>
</reference>
<reference key="2">
    <citation type="journal article" date="1998" name="Science">
        <title>Genome sequence of the nematode C. elegans: a platform for investigating biology.</title>
        <authorList>
            <consortium name="The C. elegans sequencing consortium"/>
        </authorList>
    </citation>
    <scope>NUCLEOTIDE SEQUENCE [LARGE SCALE GENOMIC DNA]</scope>
    <source>
        <strain>Bristol N2</strain>
    </source>
</reference>
<reference evidence="9" key="3">
    <citation type="journal article" date="2000" name="Curr. Biol.">
        <title>Crystal structure of the worm NitFhit Rosetta stone protein reveals a Nit tetramer binding two Fhit dimers.</title>
        <authorList>
            <person name="Pace H.C."/>
            <person name="Hodawadekar S.C."/>
            <person name="Draganescu A."/>
            <person name="Huang J."/>
            <person name="Bieganowski P."/>
            <person name="Pekarsky Y."/>
            <person name="Croce C.M."/>
            <person name="Brenner C."/>
        </authorList>
    </citation>
    <scope>X-RAY CRYSTALLOGRAPHY (2.8 ANGSTROMS)</scope>
    <scope>PROTEIN SEQUENCE OF N-TERMINUS</scope>
    <scope>ACTIVE SITES</scope>
    <scope>FUNCTION</scope>
    <scope>CATALYTIC ACTIVITY</scope>
    <scope>SUBUNIT</scope>
</reference>
<dbReference type="EC" id="3.6.1.29"/>
<dbReference type="EC" id="3.5.-.-"/>
<dbReference type="EMBL" id="AF069986">
    <property type="protein sequence ID" value="AAC39136.1"/>
    <property type="molecule type" value="mRNA"/>
</dbReference>
<dbReference type="EMBL" id="AL132860">
    <property type="protein sequence ID" value="CAB60517.1"/>
    <property type="molecule type" value="Genomic_DNA"/>
</dbReference>
<dbReference type="PIR" id="T43198">
    <property type="entry name" value="T43198"/>
</dbReference>
<dbReference type="RefSeq" id="NP_499556.1">
    <property type="nucleotide sequence ID" value="NM_067155.9"/>
</dbReference>
<dbReference type="PDB" id="1EMS">
    <property type="method" value="X-ray"/>
    <property type="resolution" value="2.80 A"/>
    <property type="chains" value="A/B=1-440"/>
</dbReference>
<dbReference type="PDBsum" id="1EMS"/>
<dbReference type="SMR" id="O76463"/>
<dbReference type="BioGRID" id="41808">
    <property type="interactions" value="17"/>
</dbReference>
<dbReference type="DIP" id="DIP-26945N"/>
<dbReference type="FunCoup" id="O76463">
    <property type="interactions" value="1584"/>
</dbReference>
<dbReference type="IntAct" id="O76463">
    <property type="interactions" value="2"/>
</dbReference>
<dbReference type="STRING" id="6239.Y56A3A.13.1"/>
<dbReference type="PaxDb" id="6239-Y56A3A.13"/>
<dbReference type="PeptideAtlas" id="O76463"/>
<dbReference type="EnsemblMetazoa" id="Y56A3A.13.1">
    <property type="protein sequence ID" value="Y56A3A.13.1"/>
    <property type="gene ID" value="WBGene00003594"/>
</dbReference>
<dbReference type="GeneID" id="176628"/>
<dbReference type="KEGG" id="cel:CELE_Y56A3A.13"/>
<dbReference type="UCSC" id="Y56A3A.13.1">
    <property type="organism name" value="c. elegans"/>
</dbReference>
<dbReference type="AGR" id="WB:WBGene00003594"/>
<dbReference type="CTD" id="176628"/>
<dbReference type="WormBase" id="Y56A3A.13">
    <property type="protein sequence ID" value="CE22580"/>
    <property type="gene ID" value="WBGene00003594"/>
    <property type="gene designation" value="nft-1"/>
</dbReference>
<dbReference type="eggNOG" id="KOG0807">
    <property type="taxonomic scope" value="Eukaryota"/>
</dbReference>
<dbReference type="eggNOG" id="KOG3379">
    <property type="taxonomic scope" value="Eukaryota"/>
</dbReference>
<dbReference type="GeneTree" id="ENSGT00550000075099"/>
<dbReference type="HOGENOM" id="CLU_030130_12_1_1"/>
<dbReference type="InParanoid" id="O76463"/>
<dbReference type="OMA" id="GWHNKKR"/>
<dbReference type="OrthoDB" id="680339at2759"/>
<dbReference type="PhylomeDB" id="O76463"/>
<dbReference type="EvolutionaryTrace" id="O76463"/>
<dbReference type="PRO" id="PR:O76463"/>
<dbReference type="Proteomes" id="UP000001940">
    <property type="component" value="Chromosome III"/>
</dbReference>
<dbReference type="Bgee" id="WBGene00003594">
    <property type="expression patterns" value="Expressed in pharyngeal muscle cell (C elegans) and 4 other cell types or tissues"/>
</dbReference>
<dbReference type="GO" id="GO:0047710">
    <property type="term" value="F:bis(5'-adenosyl)-triphosphatase activity"/>
    <property type="evidence" value="ECO:0000250"/>
    <property type="project" value="ARUK-UCL"/>
</dbReference>
<dbReference type="GO" id="GO:0110050">
    <property type="term" value="F:deaminated glutathione amidase activity"/>
    <property type="evidence" value="ECO:0000250"/>
    <property type="project" value="UniProtKB"/>
</dbReference>
<dbReference type="GO" id="GO:0000166">
    <property type="term" value="F:nucleotide binding"/>
    <property type="evidence" value="ECO:0007669"/>
    <property type="project" value="UniProtKB-KW"/>
</dbReference>
<dbReference type="GO" id="GO:0043605">
    <property type="term" value="P:amide catabolic process"/>
    <property type="evidence" value="ECO:0000250"/>
    <property type="project" value="UniProtKB"/>
</dbReference>
<dbReference type="GO" id="GO:0006139">
    <property type="term" value="P:nucleobase-containing compound metabolic process"/>
    <property type="evidence" value="ECO:0000318"/>
    <property type="project" value="GO_Central"/>
</dbReference>
<dbReference type="CDD" id="cd01275">
    <property type="entry name" value="FHIT"/>
    <property type="match status" value="1"/>
</dbReference>
<dbReference type="CDD" id="cd07572">
    <property type="entry name" value="nit"/>
    <property type="match status" value="1"/>
</dbReference>
<dbReference type="FunFam" id="3.30.428.10:FF:000011">
    <property type="entry name" value="Fragile histidine triad"/>
    <property type="match status" value="1"/>
</dbReference>
<dbReference type="FunFam" id="3.60.110.10:FF:000005">
    <property type="entry name" value="nitrilase homolog 1 isoform X1"/>
    <property type="match status" value="1"/>
</dbReference>
<dbReference type="Gene3D" id="3.60.110.10">
    <property type="entry name" value="Carbon-nitrogen hydrolase"/>
    <property type="match status" value="1"/>
</dbReference>
<dbReference type="Gene3D" id="3.30.428.10">
    <property type="entry name" value="HIT-like"/>
    <property type="match status" value="1"/>
</dbReference>
<dbReference type="InterPro" id="IPR003010">
    <property type="entry name" value="C-N_Hydrolase"/>
</dbReference>
<dbReference type="InterPro" id="IPR036526">
    <property type="entry name" value="C-N_Hydrolase_sf"/>
</dbReference>
<dbReference type="InterPro" id="IPR039383">
    <property type="entry name" value="FHIT"/>
</dbReference>
<dbReference type="InterPro" id="IPR019808">
    <property type="entry name" value="Histidine_triad_CS"/>
</dbReference>
<dbReference type="InterPro" id="IPR011146">
    <property type="entry name" value="HIT-like"/>
</dbReference>
<dbReference type="InterPro" id="IPR036265">
    <property type="entry name" value="HIT-like_sf"/>
</dbReference>
<dbReference type="InterPro" id="IPR045254">
    <property type="entry name" value="Nit1/2_C-N_Hydrolase"/>
</dbReference>
<dbReference type="InterPro" id="IPR001110">
    <property type="entry name" value="UPF0012_CS"/>
</dbReference>
<dbReference type="PANTHER" id="PTHR23088:SF27">
    <property type="entry name" value="DEAMINATED GLUTATHIONE AMIDASE"/>
    <property type="match status" value="1"/>
</dbReference>
<dbReference type="PANTHER" id="PTHR23088">
    <property type="entry name" value="NITRILASE-RELATED"/>
    <property type="match status" value="1"/>
</dbReference>
<dbReference type="Pfam" id="PF00795">
    <property type="entry name" value="CN_hydrolase"/>
    <property type="match status" value="1"/>
</dbReference>
<dbReference type="Pfam" id="PF01230">
    <property type="entry name" value="HIT"/>
    <property type="match status" value="1"/>
</dbReference>
<dbReference type="SUPFAM" id="SSF56317">
    <property type="entry name" value="Carbon-nitrogen hydrolase"/>
    <property type="match status" value="1"/>
</dbReference>
<dbReference type="SUPFAM" id="SSF54197">
    <property type="entry name" value="HIT-like"/>
    <property type="match status" value="1"/>
</dbReference>
<dbReference type="PROSITE" id="PS50263">
    <property type="entry name" value="CN_HYDROLASE"/>
    <property type="match status" value="1"/>
</dbReference>
<dbReference type="PROSITE" id="PS00892">
    <property type="entry name" value="HIT_1"/>
    <property type="match status" value="1"/>
</dbReference>
<dbReference type="PROSITE" id="PS51084">
    <property type="entry name" value="HIT_2"/>
    <property type="match status" value="1"/>
</dbReference>
<dbReference type="PROSITE" id="PS01227">
    <property type="entry name" value="UPF0012"/>
    <property type="match status" value="1"/>
</dbReference>
<protein>
    <recommendedName>
        <fullName>Nitrilase and fragile histidine triad fusion protein NitFhit</fullName>
    </recommendedName>
    <domain>
        <recommendedName>
            <fullName>Bis(5'-adenosyl)-triphosphatase</fullName>
            <ecNumber>3.6.1.29</ecNumber>
        </recommendedName>
        <alternativeName>
            <fullName>AP3A hydrolase</fullName>
            <shortName>AP3Aase</shortName>
        </alternativeName>
        <alternativeName>
            <fullName>Diadenosine 5',5'''-P1,P3-triphosphate hydrolase</fullName>
        </alternativeName>
        <alternativeName>
            <fullName>Dinucleosidetriphosphatase</fullName>
        </alternativeName>
    </domain>
    <domain>
        <recommendedName>
            <fullName>Nitrilase homolog</fullName>
            <ecNumber>3.5.-.-</ecNumber>
        </recommendedName>
    </domain>
</protein>
<feature type="chain" id="PRO_0000109791" description="Nitrilase and fragile histidine triad fusion protein NitFhit">
    <location>
        <begin position="1"/>
        <end position="440"/>
    </location>
</feature>
<feature type="domain" description="CN hydrolase" evidence="4">
    <location>
        <begin position="14"/>
        <end position="264"/>
    </location>
</feature>
<feature type="domain" description="HIT" evidence="5">
    <location>
        <begin position="297"/>
        <end position="405"/>
    </location>
</feature>
<feature type="short sequence motif" description="Histidine triad motif">
    <location>
        <begin position="390"/>
        <end position="394"/>
    </location>
</feature>
<feature type="active site" evidence="8">
    <location>
        <position position="54"/>
    </location>
</feature>
<feature type="active site" evidence="8">
    <location>
        <position position="127"/>
    </location>
</feature>
<feature type="active site" evidence="8">
    <location>
        <position position="169"/>
    </location>
</feature>
<feature type="active site" description="Tele-AMP-histidine intermediate" evidence="2 4">
    <location>
        <position position="392"/>
    </location>
</feature>
<feature type="strand" evidence="12">
    <location>
        <begin position="13"/>
        <end position="20"/>
    </location>
</feature>
<feature type="helix" evidence="12">
    <location>
        <begin position="28"/>
        <end position="44"/>
    </location>
</feature>
<feature type="strand" evidence="12">
    <location>
        <begin position="48"/>
        <end position="52"/>
    </location>
</feature>
<feature type="helix" evidence="12">
    <location>
        <begin position="63"/>
        <end position="87"/>
    </location>
</feature>
<feature type="strand" evidence="12">
    <location>
        <begin position="91"/>
        <end position="101"/>
    </location>
</feature>
<feature type="strand" evidence="12">
    <location>
        <begin position="104"/>
        <end position="115"/>
    </location>
</feature>
<feature type="strand" evidence="12">
    <location>
        <begin position="121"/>
        <end position="126"/>
    </location>
</feature>
<feature type="strand" evidence="12">
    <location>
        <begin position="132"/>
        <end position="135"/>
    </location>
</feature>
<feature type="turn" evidence="12">
    <location>
        <begin position="136"/>
        <end position="138"/>
    </location>
</feature>
<feature type="strand" evidence="12">
    <location>
        <begin position="139"/>
        <end position="142"/>
    </location>
</feature>
<feature type="helix" evidence="12">
    <location>
        <begin position="143"/>
        <end position="145"/>
    </location>
</feature>
<feature type="strand" evidence="12">
    <location>
        <begin position="157"/>
        <end position="159"/>
    </location>
</feature>
<feature type="strand" evidence="12">
    <location>
        <begin position="162"/>
        <end position="164"/>
    </location>
</feature>
<feature type="helix" evidence="12">
    <location>
        <begin position="169"/>
        <end position="173"/>
    </location>
</feature>
<feature type="helix" evidence="12">
    <location>
        <begin position="175"/>
        <end position="183"/>
    </location>
</feature>
<feature type="strand" evidence="12">
    <location>
        <begin position="187"/>
        <end position="190"/>
    </location>
</feature>
<feature type="helix" evidence="12">
    <location>
        <begin position="197"/>
        <end position="215"/>
    </location>
</feature>
<feature type="strand" evidence="12">
    <location>
        <begin position="218"/>
        <end position="221"/>
    </location>
</feature>
<feature type="strand" evidence="12">
    <location>
        <begin position="223"/>
        <end position="229"/>
    </location>
</feature>
<feature type="strand" evidence="12">
    <location>
        <begin position="232"/>
        <end position="235"/>
    </location>
</feature>
<feature type="strand" evidence="12">
    <location>
        <begin position="239"/>
        <end position="241"/>
    </location>
</feature>
<feature type="strand" evidence="12">
    <location>
        <begin position="247"/>
        <end position="250"/>
    </location>
</feature>
<feature type="strand" evidence="12">
    <location>
        <begin position="253"/>
        <end position="255"/>
    </location>
</feature>
<feature type="strand" evidence="12">
    <location>
        <begin position="257"/>
        <end position="263"/>
    </location>
</feature>
<feature type="helix" evidence="12">
    <location>
        <begin position="264"/>
        <end position="273"/>
    </location>
</feature>
<feature type="helix" evidence="12">
    <location>
        <begin position="276"/>
        <end position="278"/>
    </location>
</feature>
<feature type="turn" evidence="12">
    <location>
        <begin position="282"/>
        <end position="284"/>
    </location>
</feature>
<feature type="helix" evidence="12">
    <location>
        <begin position="308"/>
        <end position="310"/>
    </location>
</feature>
<feature type="strand" evidence="12">
    <location>
        <begin position="311"/>
        <end position="314"/>
    </location>
</feature>
<feature type="strand" evidence="12">
    <location>
        <begin position="316"/>
        <end position="322"/>
    </location>
</feature>
<feature type="strand" evidence="12">
    <location>
        <begin position="332"/>
        <end position="338"/>
    </location>
</feature>
<feature type="helix" evidence="12">
    <location>
        <begin position="343"/>
        <end position="345"/>
    </location>
</feature>
<feature type="helix" evidence="12">
    <location>
        <begin position="348"/>
        <end position="368"/>
    </location>
</feature>
<feature type="strand" evidence="12">
    <location>
        <begin position="372"/>
        <end position="377"/>
    </location>
</feature>
<feature type="helix" evidence="12">
    <location>
        <begin position="382"/>
        <end position="384"/>
    </location>
</feature>
<feature type="strand" evidence="12">
    <location>
        <begin position="388"/>
        <end position="390"/>
    </location>
</feature>
<feature type="strand" evidence="12">
    <location>
        <begin position="393"/>
        <end position="398"/>
    </location>
</feature>
<feature type="helix" evidence="12">
    <location>
        <begin position="426"/>
        <end position="437"/>
    </location>
</feature>
<gene>
    <name evidence="11" type="primary">nft-1</name>
    <name type="ORF">Y56A3A.13</name>
</gene>
<proteinExistence type="evidence at protein level"/>